<protein>
    <recommendedName>
        <fullName evidence="1">Ribosomal RNA small subunit methyltransferase A</fullName>
        <ecNumber evidence="1">2.1.1.182</ecNumber>
    </recommendedName>
    <alternativeName>
        <fullName evidence="1">16S rRNA (adenine(1518)-N(6)/adenine(1519)-N(6))-dimethyltransferase</fullName>
    </alternativeName>
    <alternativeName>
        <fullName evidence="1">16S rRNA dimethyladenosine transferase</fullName>
    </alternativeName>
    <alternativeName>
        <fullName evidence="1">16S rRNA dimethylase</fullName>
    </alternativeName>
    <alternativeName>
        <fullName evidence="1">S-adenosylmethionine-6-N', N'-adenosyl(rRNA) dimethyltransferase</fullName>
    </alternativeName>
</protein>
<dbReference type="EC" id="2.1.1.182" evidence="1"/>
<dbReference type="EMBL" id="CP000681">
    <property type="protein sequence ID" value="ABP74718.1"/>
    <property type="molecule type" value="Genomic_DNA"/>
</dbReference>
<dbReference type="SMR" id="A4Y435"/>
<dbReference type="STRING" id="319224.Sputcn32_0989"/>
<dbReference type="KEGG" id="spc:Sputcn32_0989"/>
<dbReference type="eggNOG" id="COG0030">
    <property type="taxonomic scope" value="Bacteria"/>
</dbReference>
<dbReference type="HOGENOM" id="CLU_041220_0_1_6"/>
<dbReference type="GO" id="GO:0005829">
    <property type="term" value="C:cytosol"/>
    <property type="evidence" value="ECO:0007669"/>
    <property type="project" value="TreeGrafter"/>
</dbReference>
<dbReference type="GO" id="GO:0052908">
    <property type="term" value="F:16S rRNA (adenine(1518)-N(6)/adenine(1519)-N(6))-dimethyltransferase activity"/>
    <property type="evidence" value="ECO:0007669"/>
    <property type="project" value="UniProtKB-EC"/>
</dbReference>
<dbReference type="GO" id="GO:0003723">
    <property type="term" value="F:RNA binding"/>
    <property type="evidence" value="ECO:0007669"/>
    <property type="project" value="UniProtKB-KW"/>
</dbReference>
<dbReference type="FunFam" id="1.10.8.100:FF:000001">
    <property type="entry name" value="Ribosomal RNA small subunit methyltransferase A"/>
    <property type="match status" value="1"/>
</dbReference>
<dbReference type="FunFam" id="3.40.50.150:FF:000006">
    <property type="entry name" value="Ribosomal RNA small subunit methyltransferase A"/>
    <property type="match status" value="1"/>
</dbReference>
<dbReference type="Gene3D" id="1.10.8.100">
    <property type="entry name" value="Ribosomal RNA adenine dimethylase-like, domain 2"/>
    <property type="match status" value="1"/>
</dbReference>
<dbReference type="Gene3D" id="3.40.50.150">
    <property type="entry name" value="Vaccinia Virus protein VP39"/>
    <property type="match status" value="1"/>
</dbReference>
<dbReference type="HAMAP" id="MF_00607">
    <property type="entry name" value="16SrRNA_methyltr_A"/>
    <property type="match status" value="1"/>
</dbReference>
<dbReference type="InterPro" id="IPR001737">
    <property type="entry name" value="KsgA/Erm"/>
</dbReference>
<dbReference type="InterPro" id="IPR023165">
    <property type="entry name" value="rRNA_Ade_diMease-like_C"/>
</dbReference>
<dbReference type="InterPro" id="IPR020596">
    <property type="entry name" value="rRNA_Ade_Mease_Trfase_CS"/>
</dbReference>
<dbReference type="InterPro" id="IPR020598">
    <property type="entry name" value="rRNA_Ade_methylase_Trfase_N"/>
</dbReference>
<dbReference type="InterPro" id="IPR011530">
    <property type="entry name" value="rRNA_adenine_dimethylase"/>
</dbReference>
<dbReference type="InterPro" id="IPR029063">
    <property type="entry name" value="SAM-dependent_MTases_sf"/>
</dbReference>
<dbReference type="NCBIfam" id="TIGR00755">
    <property type="entry name" value="ksgA"/>
    <property type="match status" value="1"/>
</dbReference>
<dbReference type="PANTHER" id="PTHR11727">
    <property type="entry name" value="DIMETHYLADENOSINE TRANSFERASE"/>
    <property type="match status" value="1"/>
</dbReference>
<dbReference type="PANTHER" id="PTHR11727:SF7">
    <property type="entry name" value="DIMETHYLADENOSINE TRANSFERASE-RELATED"/>
    <property type="match status" value="1"/>
</dbReference>
<dbReference type="Pfam" id="PF00398">
    <property type="entry name" value="RrnaAD"/>
    <property type="match status" value="1"/>
</dbReference>
<dbReference type="SMART" id="SM00650">
    <property type="entry name" value="rADc"/>
    <property type="match status" value="1"/>
</dbReference>
<dbReference type="SUPFAM" id="SSF53335">
    <property type="entry name" value="S-adenosyl-L-methionine-dependent methyltransferases"/>
    <property type="match status" value="1"/>
</dbReference>
<dbReference type="PROSITE" id="PS01131">
    <property type="entry name" value="RRNA_A_DIMETH"/>
    <property type="match status" value="1"/>
</dbReference>
<dbReference type="PROSITE" id="PS51689">
    <property type="entry name" value="SAM_RNA_A_N6_MT"/>
    <property type="match status" value="1"/>
</dbReference>
<accession>A4Y435</accession>
<keyword id="KW-0963">Cytoplasm</keyword>
<keyword id="KW-0489">Methyltransferase</keyword>
<keyword id="KW-0694">RNA-binding</keyword>
<keyword id="KW-0698">rRNA processing</keyword>
<keyword id="KW-0949">S-adenosyl-L-methionine</keyword>
<keyword id="KW-0808">Transferase</keyword>
<feature type="chain" id="PRO_1000056671" description="Ribosomal RNA small subunit methyltransferase A">
    <location>
        <begin position="1"/>
        <end position="268"/>
    </location>
</feature>
<feature type="binding site" evidence="1">
    <location>
        <position position="18"/>
    </location>
    <ligand>
        <name>S-adenosyl-L-methionine</name>
        <dbReference type="ChEBI" id="CHEBI:59789"/>
    </ligand>
</feature>
<feature type="binding site" evidence="1">
    <location>
        <position position="20"/>
    </location>
    <ligand>
        <name>S-adenosyl-L-methionine</name>
        <dbReference type="ChEBI" id="CHEBI:59789"/>
    </ligand>
</feature>
<feature type="binding site" evidence="1">
    <location>
        <position position="45"/>
    </location>
    <ligand>
        <name>S-adenosyl-L-methionine</name>
        <dbReference type="ChEBI" id="CHEBI:59789"/>
    </ligand>
</feature>
<feature type="binding site" evidence="1">
    <location>
        <position position="66"/>
    </location>
    <ligand>
        <name>S-adenosyl-L-methionine</name>
        <dbReference type="ChEBI" id="CHEBI:59789"/>
    </ligand>
</feature>
<feature type="binding site" evidence="1">
    <location>
        <position position="91"/>
    </location>
    <ligand>
        <name>S-adenosyl-L-methionine</name>
        <dbReference type="ChEBI" id="CHEBI:59789"/>
    </ligand>
</feature>
<feature type="binding site" evidence="1">
    <location>
        <position position="112"/>
    </location>
    <ligand>
        <name>S-adenosyl-L-methionine</name>
        <dbReference type="ChEBI" id="CHEBI:59789"/>
    </ligand>
</feature>
<sequence>MSNKVHLGHTARKRFGQNFLTDGNVINRIVGAIAPDNNHVMVEIGPGLGALTEPVAMAVDNLTVVELDRDLVERLHKHPVLKDKLTIHQGDALQFDFSQLVVPGKKLKVFGNLPYNISTPLMFHLFEFAEQIETMHFMLQKEVVLRLSASPGCKAYGRLTVMAQYFCQVVPVLEVPPHSFTPAPKVDSAVVRLLPYAEKPFPCKDVNVLRQLCTTAFNMRRKTLRNNLKHMLSDAEFEQLGIDQSQRPEQISVEQYVAMANMICDRKA</sequence>
<evidence type="ECO:0000255" key="1">
    <source>
        <dbReference type="HAMAP-Rule" id="MF_00607"/>
    </source>
</evidence>
<organism>
    <name type="scientific">Shewanella putrefaciens (strain CN-32 / ATCC BAA-453)</name>
    <dbReference type="NCBI Taxonomy" id="319224"/>
    <lineage>
        <taxon>Bacteria</taxon>
        <taxon>Pseudomonadati</taxon>
        <taxon>Pseudomonadota</taxon>
        <taxon>Gammaproteobacteria</taxon>
        <taxon>Alteromonadales</taxon>
        <taxon>Shewanellaceae</taxon>
        <taxon>Shewanella</taxon>
    </lineage>
</organism>
<reference key="1">
    <citation type="submission" date="2007-04" db="EMBL/GenBank/DDBJ databases">
        <title>Complete sequence of Shewanella putrefaciens CN-32.</title>
        <authorList>
            <consortium name="US DOE Joint Genome Institute"/>
            <person name="Copeland A."/>
            <person name="Lucas S."/>
            <person name="Lapidus A."/>
            <person name="Barry K."/>
            <person name="Detter J.C."/>
            <person name="Glavina del Rio T."/>
            <person name="Hammon N."/>
            <person name="Israni S."/>
            <person name="Dalin E."/>
            <person name="Tice H."/>
            <person name="Pitluck S."/>
            <person name="Chain P."/>
            <person name="Malfatti S."/>
            <person name="Shin M."/>
            <person name="Vergez L."/>
            <person name="Schmutz J."/>
            <person name="Larimer F."/>
            <person name="Land M."/>
            <person name="Hauser L."/>
            <person name="Kyrpides N."/>
            <person name="Mikhailova N."/>
            <person name="Romine M.F."/>
            <person name="Fredrickson J."/>
            <person name="Tiedje J."/>
            <person name="Richardson P."/>
        </authorList>
    </citation>
    <scope>NUCLEOTIDE SEQUENCE [LARGE SCALE GENOMIC DNA]</scope>
    <source>
        <strain>CN-32 / ATCC BAA-453</strain>
    </source>
</reference>
<comment type="function">
    <text evidence="1">Specifically dimethylates two adjacent adenosines (A1518 and A1519) in the loop of a conserved hairpin near the 3'-end of 16S rRNA in the 30S particle. May play a critical role in biogenesis of 30S subunits.</text>
</comment>
<comment type="catalytic activity">
    <reaction evidence="1">
        <text>adenosine(1518)/adenosine(1519) in 16S rRNA + 4 S-adenosyl-L-methionine = N(6)-dimethyladenosine(1518)/N(6)-dimethyladenosine(1519) in 16S rRNA + 4 S-adenosyl-L-homocysteine + 4 H(+)</text>
        <dbReference type="Rhea" id="RHEA:19609"/>
        <dbReference type="Rhea" id="RHEA-COMP:10232"/>
        <dbReference type="Rhea" id="RHEA-COMP:10233"/>
        <dbReference type="ChEBI" id="CHEBI:15378"/>
        <dbReference type="ChEBI" id="CHEBI:57856"/>
        <dbReference type="ChEBI" id="CHEBI:59789"/>
        <dbReference type="ChEBI" id="CHEBI:74411"/>
        <dbReference type="ChEBI" id="CHEBI:74493"/>
        <dbReference type="EC" id="2.1.1.182"/>
    </reaction>
</comment>
<comment type="subcellular location">
    <subcellularLocation>
        <location evidence="1">Cytoplasm</location>
    </subcellularLocation>
</comment>
<comment type="similarity">
    <text evidence="1">Belongs to the class I-like SAM-binding methyltransferase superfamily. rRNA adenine N(6)-methyltransferase family. RsmA subfamily.</text>
</comment>
<name>RSMA_SHEPC</name>
<proteinExistence type="inferred from homology"/>
<gene>
    <name evidence="1" type="primary">rsmA</name>
    <name evidence="1" type="synonym">ksgA</name>
    <name type="ordered locus">Sputcn32_0989</name>
</gene>